<accession>A8FW10</accession>
<sequence length="245" mass="27310">MNVTLLIPARYGSSRFPGKPLAPINGKPMIQHVYERASLAKGLTAIYVATDDDRIKDAVEGFGGKVVMTSPDAASGTDRIEDAITQLGLKDDDLVVNLQGDQPLIDPISIEQIISLFERHPGEFGMATLGFEITEKCELDDPKHVKMVFDNEFNALYFSRARIPFGRDTNDYPVYKHLGVYAYTRSFISTFAKLPLGRLEDLEKLEQLRALEHGYKIKVAISAFDSPEVDTPEDIRVCESRLAVD</sequence>
<gene>
    <name evidence="1" type="primary">kdsB</name>
    <name type="ordered locus">Ssed_2424</name>
</gene>
<feature type="chain" id="PRO_0000370156" description="8-amino-3,8-dideoxy-manno-octulosonate cytidylyltransferase">
    <location>
        <begin position="1"/>
        <end position="245"/>
    </location>
</feature>
<organism>
    <name type="scientific">Shewanella sediminis (strain HAW-EB3)</name>
    <dbReference type="NCBI Taxonomy" id="425104"/>
    <lineage>
        <taxon>Bacteria</taxon>
        <taxon>Pseudomonadati</taxon>
        <taxon>Pseudomonadota</taxon>
        <taxon>Gammaproteobacteria</taxon>
        <taxon>Alteromonadales</taxon>
        <taxon>Shewanellaceae</taxon>
        <taxon>Shewanella</taxon>
    </lineage>
</organism>
<protein>
    <recommendedName>
        <fullName evidence="1">8-amino-3,8-dideoxy-manno-octulosonate cytidylyltransferase</fullName>
        <ecNumber evidence="1">2.7.7.90</ecNumber>
    </recommendedName>
    <alternativeName>
        <fullName evidence="1">CMP-8-amino-3,8-dideoxy-manno-octulosonate synthase</fullName>
    </alternativeName>
</protein>
<reference key="1">
    <citation type="submission" date="2007-08" db="EMBL/GenBank/DDBJ databases">
        <title>Complete sequence of Shewanella sediminis HAW-EB3.</title>
        <authorList>
            <consortium name="US DOE Joint Genome Institute"/>
            <person name="Copeland A."/>
            <person name="Lucas S."/>
            <person name="Lapidus A."/>
            <person name="Barry K."/>
            <person name="Glavina del Rio T."/>
            <person name="Dalin E."/>
            <person name="Tice H."/>
            <person name="Pitluck S."/>
            <person name="Chertkov O."/>
            <person name="Brettin T."/>
            <person name="Bruce D."/>
            <person name="Detter J.C."/>
            <person name="Han C."/>
            <person name="Schmutz J."/>
            <person name="Larimer F."/>
            <person name="Land M."/>
            <person name="Hauser L."/>
            <person name="Kyrpides N."/>
            <person name="Kim E."/>
            <person name="Zhao J.-S."/>
            <person name="Richardson P."/>
        </authorList>
    </citation>
    <scope>NUCLEOTIDE SEQUENCE [LARGE SCALE GENOMIC DNA]</scope>
    <source>
        <strain>HAW-EB3</strain>
    </source>
</reference>
<keyword id="KW-0963">Cytoplasm</keyword>
<keyword id="KW-0448">Lipopolysaccharide biosynthesis</keyword>
<keyword id="KW-0548">Nucleotidyltransferase</keyword>
<keyword id="KW-1185">Reference proteome</keyword>
<keyword id="KW-0808">Transferase</keyword>
<dbReference type="EC" id="2.7.7.90" evidence="1"/>
<dbReference type="EMBL" id="CP000821">
    <property type="protein sequence ID" value="ABV37033.1"/>
    <property type="molecule type" value="Genomic_DNA"/>
</dbReference>
<dbReference type="RefSeq" id="WP_012142768.1">
    <property type="nucleotide sequence ID" value="NC_009831.1"/>
</dbReference>
<dbReference type="SMR" id="A8FW10"/>
<dbReference type="STRING" id="425104.Ssed_2424"/>
<dbReference type="KEGG" id="sse:Ssed_2424"/>
<dbReference type="eggNOG" id="COG1212">
    <property type="taxonomic scope" value="Bacteria"/>
</dbReference>
<dbReference type="HOGENOM" id="CLU_065038_0_1_6"/>
<dbReference type="OrthoDB" id="9815559at2"/>
<dbReference type="UniPathway" id="UPA00030"/>
<dbReference type="Proteomes" id="UP000002015">
    <property type="component" value="Chromosome"/>
</dbReference>
<dbReference type="GO" id="GO:0005829">
    <property type="term" value="C:cytosol"/>
    <property type="evidence" value="ECO:0007669"/>
    <property type="project" value="TreeGrafter"/>
</dbReference>
<dbReference type="GO" id="GO:0008690">
    <property type="term" value="F:3-deoxy-manno-octulosonate cytidylyltransferase activity"/>
    <property type="evidence" value="ECO:0007669"/>
    <property type="project" value="InterPro"/>
</dbReference>
<dbReference type="GO" id="GO:0009103">
    <property type="term" value="P:lipopolysaccharide biosynthetic process"/>
    <property type="evidence" value="ECO:0007669"/>
    <property type="project" value="UniProtKB-UniRule"/>
</dbReference>
<dbReference type="CDD" id="cd02517">
    <property type="entry name" value="CMP-KDO-Synthetase"/>
    <property type="match status" value="1"/>
</dbReference>
<dbReference type="FunFam" id="3.90.550.10:FF:000011">
    <property type="entry name" value="3-deoxy-manno-octulosonate cytidylyltransferase"/>
    <property type="match status" value="1"/>
</dbReference>
<dbReference type="Gene3D" id="3.90.550.10">
    <property type="entry name" value="Spore Coat Polysaccharide Biosynthesis Protein SpsA, Chain A"/>
    <property type="match status" value="1"/>
</dbReference>
<dbReference type="HAMAP" id="MF_00057">
    <property type="entry name" value="KdsB"/>
    <property type="match status" value="1"/>
</dbReference>
<dbReference type="InterPro" id="IPR003329">
    <property type="entry name" value="Cytidylyl_trans"/>
</dbReference>
<dbReference type="InterPro" id="IPR004528">
    <property type="entry name" value="KdsB"/>
</dbReference>
<dbReference type="InterPro" id="IPR029044">
    <property type="entry name" value="Nucleotide-diphossugar_trans"/>
</dbReference>
<dbReference type="NCBIfam" id="TIGR00466">
    <property type="entry name" value="kdsB"/>
    <property type="match status" value="1"/>
</dbReference>
<dbReference type="NCBIfam" id="NF003950">
    <property type="entry name" value="PRK05450.1-3"/>
    <property type="match status" value="1"/>
</dbReference>
<dbReference type="NCBIfam" id="NF003952">
    <property type="entry name" value="PRK05450.1-5"/>
    <property type="match status" value="1"/>
</dbReference>
<dbReference type="NCBIfam" id="NF009905">
    <property type="entry name" value="PRK13368.1"/>
    <property type="match status" value="1"/>
</dbReference>
<dbReference type="PANTHER" id="PTHR42866">
    <property type="entry name" value="3-DEOXY-MANNO-OCTULOSONATE CYTIDYLYLTRANSFERASE"/>
    <property type="match status" value="1"/>
</dbReference>
<dbReference type="PANTHER" id="PTHR42866:SF2">
    <property type="entry name" value="3-DEOXY-MANNO-OCTULOSONATE CYTIDYLYLTRANSFERASE, MITOCHONDRIAL"/>
    <property type="match status" value="1"/>
</dbReference>
<dbReference type="Pfam" id="PF02348">
    <property type="entry name" value="CTP_transf_3"/>
    <property type="match status" value="1"/>
</dbReference>
<dbReference type="SUPFAM" id="SSF53448">
    <property type="entry name" value="Nucleotide-diphospho-sugar transferases"/>
    <property type="match status" value="1"/>
</dbReference>
<comment type="function">
    <text evidence="1">Activates KDO8N (a required 8-carbon sugar) for incorporation into bacterial lipopolysaccharide in the Shewanella genus.</text>
</comment>
<comment type="catalytic activity">
    <reaction evidence="1">
        <text>8-amino-3,8-dideoxy-alpha-D-manno-octulosonate + CTP = CMP-8-amino-3,8-dideoxy-alpha-D-manno-oct-2-ulosonate + diphosphate</text>
        <dbReference type="Rhea" id="RHEA:49284"/>
        <dbReference type="ChEBI" id="CHEBI:33019"/>
        <dbReference type="ChEBI" id="CHEBI:37563"/>
        <dbReference type="ChEBI" id="CHEBI:87091"/>
        <dbReference type="ChEBI" id="CHEBI:91089"/>
        <dbReference type="EC" id="2.7.7.90"/>
    </reaction>
</comment>
<comment type="pathway">
    <text evidence="1">Bacterial outer membrane biogenesis; lipopolysaccharide biosynthesis.</text>
</comment>
<comment type="subcellular location">
    <subcellularLocation>
        <location evidence="1">Cytoplasm</location>
    </subcellularLocation>
</comment>
<comment type="similarity">
    <text evidence="1">Belongs to the KdsB family.</text>
</comment>
<proteinExistence type="inferred from homology"/>
<name>KDSB_SHESH</name>
<evidence type="ECO:0000255" key="1">
    <source>
        <dbReference type="HAMAP-Rule" id="MF_00057"/>
    </source>
</evidence>